<organism>
    <name type="scientific">Escherichia coli O6:K15:H31 (strain 536 / UPEC)</name>
    <dbReference type="NCBI Taxonomy" id="362663"/>
    <lineage>
        <taxon>Bacteria</taxon>
        <taxon>Pseudomonadati</taxon>
        <taxon>Pseudomonadota</taxon>
        <taxon>Gammaproteobacteria</taxon>
        <taxon>Enterobacterales</taxon>
        <taxon>Enterobacteriaceae</taxon>
        <taxon>Escherichia</taxon>
    </lineage>
</organism>
<dbReference type="EMBL" id="CP000247">
    <property type="protein sequence ID" value="ABG68515.1"/>
    <property type="status" value="ALT_INIT"/>
    <property type="molecule type" value="Genomic_DNA"/>
</dbReference>
<dbReference type="RefSeq" id="WP_001138904.1">
    <property type="nucleotide sequence ID" value="NC_008253.1"/>
</dbReference>
<dbReference type="SMR" id="Q0TKL6"/>
<dbReference type="GeneID" id="93777034"/>
<dbReference type="KEGG" id="ecp:ECP_0486"/>
<dbReference type="HOGENOM" id="CLU_099839_1_0_6"/>
<dbReference type="Proteomes" id="UP000009182">
    <property type="component" value="Chromosome"/>
</dbReference>
<dbReference type="GO" id="GO:0005829">
    <property type="term" value="C:cytosol"/>
    <property type="evidence" value="ECO:0007669"/>
    <property type="project" value="TreeGrafter"/>
</dbReference>
<dbReference type="GO" id="GO:0000166">
    <property type="term" value="F:nucleotide binding"/>
    <property type="evidence" value="ECO:0007669"/>
    <property type="project" value="TreeGrafter"/>
</dbReference>
<dbReference type="CDD" id="cd11740">
    <property type="entry name" value="YajQ_like"/>
    <property type="match status" value="1"/>
</dbReference>
<dbReference type="FunFam" id="3.30.70.860:FF:000001">
    <property type="entry name" value="UPF0234 protein YajQ"/>
    <property type="match status" value="1"/>
</dbReference>
<dbReference type="FunFam" id="3.30.70.990:FF:000001">
    <property type="entry name" value="UPF0234 protein YajQ"/>
    <property type="match status" value="1"/>
</dbReference>
<dbReference type="Gene3D" id="3.30.70.860">
    <property type="match status" value="1"/>
</dbReference>
<dbReference type="Gene3D" id="3.30.70.990">
    <property type="entry name" value="YajQ-like, domain 2"/>
    <property type="match status" value="1"/>
</dbReference>
<dbReference type="HAMAP" id="MF_00632">
    <property type="entry name" value="YajQ"/>
    <property type="match status" value="1"/>
</dbReference>
<dbReference type="InterPro" id="IPR007551">
    <property type="entry name" value="DUF520"/>
</dbReference>
<dbReference type="InterPro" id="IPR035571">
    <property type="entry name" value="UPF0234-like_C"/>
</dbReference>
<dbReference type="InterPro" id="IPR035570">
    <property type="entry name" value="UPF0234_N"/>
</dbReference>
<dbReference type="InterPro" id="IPR036183">
    <property type="entry name" value="YajQ-like_sf"/>
</dbReference>
<dbReference type="NCBIfam" id="NF003819">
    <property type="entry name" value="PRK05412.1"/>
    <property type="match status" value="1"/>
</dbReference>
<dbReference type="PANTHER" id="PTHR30476">
    <property type="entry name" value="UPF0234 PROTEIN YAJQ"/>
    <property type="match status" value="1"/>
</dbReference>
<dbReference type="PANTHER" id="PTHR30476:SF0">
    <property type="entry name" value="UPF0234 PROTEIN YAJQ"/>
    <property type="match status" value="1"/>
</dbReference>
<dbReference type="Pfam" id="PF04461">
    <property type="entry name" value="DUF520"/>
    <property type="match status" value="1"/>
</dbReference>
<dbReference type="SUPFAM" id="SSF89963">
    <property type="entry name" value="YajQ-like"/>
    <property type="match status" value="2"/>
</dbReference>
<reference key="1">
    <citation type="journal article" date="2006" name="Mol. Microbiol.">
        <title>Role of pathogenicity island-associated integrases in the genome plasticity of uropathogenic Escherichia coli strain 536.</title>
        <authorList>
            <person name="Hochhut B."/>
            <person name="Wilde C."/>
            <person name="Balling G."/>
            <person name="Middendorf B."/>
            <person name="Dobrindt U."/>
            <person name="Brzuszkiewicz E."/>
            <person name="Gottschalk G."/>
            <person name="Carniel E."/>
            <person name="Hacker J."/>
        </authorList>
    </citation>
    <scope>NUCLEOTIDE SEQUENCE [LARGE SCALE GENOMIC DNA]</scope>
    <source>
        <strain>536 / UPEC</strain>
    </source>
</reference>
<name>YAJQ_ECOL5</name>
<gene>
    <name evidence="1" type="primary">yajQ</name>
    <name type="ordered locus">ECP_0486</name>
</gene>
<feature type="chain" id="PRO_0000261936" description="Nucleotide-binding protein YajQ">
    <location>
        <begin position="1"/>
        <end position="163"/>
    </location>
</feature>
<evidence type="ECO:0000255" key="1">
    <source>
        <dbReference type="HAMAP-Rule" id="MF_00632"/>
    </source>
</evidence>
<evidence type="ECO:0000305" key="2"/>
<proteinExistence type="inferred from homology"/>
<sequence length="163" mass="18344">MPSFDIVSEVDLQEARNAVDNASREVESRFDFRNVEASFELNDASKTIKVLSESDFQVNQLLDILRAKLLKRGIEGSSLDVPENIVHSGKTWFVEAKLKQGIESATQKKIVKMIKDSKLKVQAQIQGDEIRVTGKSRDDLQAVMAMVRGGDLGQPFQFKNFRD</sequence>
<comment type="function">
    <text evidence="1">Nucleotide-binding protein.</text>
</comment>
<comment type="similarity">
    <text evidence="1">Belongs to the YajQ family.</text>
</comment>
<comment type="sequence caution" evidence="2">
    <conflict type="erroneous initiation">
        <sequence resource="EMBL-CDS" id="ABG68515"/>
    </conflict>
</comment>
<accession>Q0TKL6</accession>
<protein>
    <recommendedName>
        <fullName evidence="1">Nucleotide-binding protein YajQ</fullName>
    </recommendedName>
</protein>
<keyword id="KW-0547">Nucleotide-binding</keyword>